<proteinExistence type="evidence at protein level"/>
<evidence type="ECO:0000250" key="1"/>
<evidence type="ECO:0000255" key="2"/>
<evidence type="ECO:0000269" key="3">
    <source>
    </source>
</evidence>
<evidence type="ECO:0000269" key="4">
    <source>
    </source>
</evidence>
<evidence type="ECO:0000269" key="5">
    <source>
    </source>
</evidence>
<evidence type="ECO:0000269" key="6">
    <source>
    </source>
</evidence>
<evidence type="ECO:0000269" key="7">
    <source>
    </source>
</evidence>
<evidence type="ECO:0000269" key="8">
    <source>
    </source>
</evidence>
<evidence type="ECO:0000269" key="9">
    <source>
    </source>
</evidence>
<evidence type="ECO:0000269" key="10">
    <source>
    </source>
</evidence>
<evidence type="ECO:0000303" key="11">
    <source>
    </source>
</evidence>
<evidence type="ECO:0000303" key="12">
    <source>
    </source>
</evidence>
<evidence type="ECO:0000303" key="13">
    <source>
    </source>
</evidence>
<evidence type="ECO:0000303" key="14">
    <source ref="3"/>
</evidence>
<evidence type="ECO:0000303" key="15">
    <source ref="4"/>
</evidence>
<evidence type="ECO:0000305" key="16"/>
<evidence type="ECO:0007744" key="17">
    <source>
    </source>
</evidence>
<protein>
    <recommendedName>
        <fullName>Prominin-1</fullName>
    </recommendedName>
    <alternativeName>
        <fullName>Antigen AC133</fullName>
    </alternativeName>
    <alternativeName>
        <fullName>Prominin-like protein 1</fullName>
    </alternativeName>
    <cdAntigenName>CD133</cdAntigenName>
</protein>
<feature type="signal peptide" evidence="2">
    <location>
        <begin position="1"/>
        <end position="19"/>
    </location>
</feature>
<feature type="chain" id="PRO_0000025813" description="Prominin-1">
    <location>
        <begin position="20"/>
        <end position="865"/>
    </location>
</feature>
<feature type="topological domain" description="Extracellular" evidence="2">
    <location>
        <begin position="20"/>
        <end position="108"/>
    </location>
</feature>
<feature type="transmembrane region" description="Helical" evidence="2">
    <location>
        <begin position="109"/>
        <end position="129"/>
    </location>
</feature>
<feature type="topological domain" description="Cytoplasmic" evidence="2">
    <location>
        <begin position="130"/>
        <end position="157"/>
    </location>
</feature>
<feature type="transmembrane region" description="Helical" evidence="2">
    <location>
        <begin position="158"/>
        <end position="178"/>
    </location>
</feature>
<feature type="topological domain" description="Extracellular" evidence="2">
    <location>
        <begin position="179"/>
        <end position="433"/>
    </location>
</feature>
<feature type="transmembrane region" description="Helical" evidence="2">
    <location>
        <begin position="434"/>
        <end position="454"/>
    </location>
</feature>
<feature type="topological domain" description="Cytoplasmic" evidence="2">
    <location>
        <begin position="455"/>
        <end position="486"/>
    </location>
</feature>
<feature type="transmembrane region" description="Helical" evidence="2">
    <location>
        <begin position="487"/>
        <end position="507"/>
    </location>
</feature>
<feature type="topological domain" description="Extracellular" evidence="2">
    <location>
        <begin position="508"/>
        <end position="792"/>
    </location>
</feature>
<feature type="transmembrane region" description="Helical" evidence="2">
    <location>
        <begin position="793"/>
        <end position="813"/>
    </location>
</feature>
<feature type="topological domain" description="Cytoplasmic" evidence="2">
    <location>
        <begin position="814"/>
        <end position="865"/>
    </location>
</feature>
<feature type="modified residue" description="N6-acetyllysine" evidence="9">
    <location>
        <position position="225"/>
    </location>
</feature>
<feature type="modified residue" description="N6-acetyllysine" evidence="9">
    <location>
        <position position="257"/>
    </location>
</feature>
<feature type="modified residue" description="N6-acetyllysine" evidence="9">
    <location>
        <position position="264"/>
    </location>
</feature>
<feature type="modified residue" description="Phosphoserine" evidence="17">
    <location>
        <position position="863"/>
    </location>
</feature>
<feature type="glycosylation site" description="N-linked (GlcNAc...) asparagine" evidence="2">
    <location>
        <position position="220"/>
    </location>
</feature>
<feature type="glycosylation site" description="N-linked (GlcNAc...) asparagine" evidence="2">
    <location>
        <position position="274"/>
    </location>
</feature>
<feature type="glycosylation site" description="N-linked (GlcNAc...) asparagine" evidence="2">
    <location>
        <position position="395"/>
    </location>
</feature>
<feature type="glycosylation site" description="N-linked (GlcNAc...) asparagine" evidence="2">
    <location>
        <position position="414"/>
    </location>
</feature>
<feature type="glycosylation site" description="N-linked (GlcNAc...) asparagine" evidence="2">
    <location>
        <position position="548"/>
    </location>
</feature>
<feature type="glycosylation site" description="N-linked (GlcNAc...) asparagine" evidence="2">
    <location>
        <position position="580"/>
    </location>
</feature>
<feature type="glycosylation site" description="N-linked (GlcNAc...) asparagine" evidence="2">
    <location>
        <position position="729"/>
    </location>
</feature>
<feature type="glycosylation site" description="N-linked (GlcNAc...) asparagine" evidence="2">
    <location>
        <position position="730"/>
    </location>
</feature>
<feature type="splice variant" id="VSP_039069" description="In isoform 2." evidence="11 12 13 15">
    <location>
        <begin position="92"/>
        <end position="100"/>
    </location>
</feature>
<feature type="splice variant" id="VSP_040000" description="In isoform 3, isoform 4 and isoform 5." evidence="14">
    <location>
        <begin position="93"/>
        <end position="101"/>
    </location>
</feature>
<feature type="splice variant" id="VSP_040001" description="In isoform 5 and isoform 6." evidence="16">
    <location>
        <begin position="831"/>
        <end position="861"/>
    </location>
</feature>
<feature type="splice variant" id="VSP_040002" description="In isoform 3." evidence="14">
    <original>VETIPMKNM</original>
    <variation>SSWVTSVQC</variation>
    <location>
        <begin position="831"/>
        <end position="839"/>
    </location>
</feature>
<feature type="splice variant" id="VSP_040003" description="In isoform 4 and isoform 7." evidence="16">
    <location>
        <begin position="839"/>
        <end position="861"/>
    </location>
</feature>
<feature type="splice variant" id="VSP_040004" description="In isoform 3." evidence="14">
    <location>
        <begin position="840"/>
        <end position="865"/>
    </location>
</feature>
<feature type="sequence variant" id="VAR_010382">
    <original>A</original>
    <variation>G</variation>
    <location>
        <position position="31"/>
    </location>
</feature>
<feature type="sequence variant" id="VAR_010383">
    <original>A</original>
    <variation>S</variation>
    <location>
        <position position="31"/>
    </location>
</feature>
<feature type="sequence variant" id="VAR_057961" description="In CORD12, STGD4 and MCDR2; affects the interaction with actin; dbSNP:rs137853006." evidence="7 10">
    <original>R</original>
    <variation>C</variation>
    <location>
        <position position="373"/>
    </location>
</feature>
<feature type="mutagenesis site" description="Loss of acetylation; when associated with Q-257 and Q-264." evidence="9">
    <original>K</original>
    <variation>Q</variation>
    <location>
        <position position="225"/>
    </location>
</feature>
<feature type="mutagenesis site" description="Loss of expression of the protein in part due to proteasomal degradation; when associated with Q-257 and Q-264." evidence="9">
    <original>K</original>
    <variation>R</variation>
    <location>
        <position position="225"/>
    </location>
</feature>
<feature type="mutagenesis site" description="Loss of acetylation; when associated with Q-225 and Q-264." evidence="9">
    <original>K</original>
    <variation>Q</variation>
    <location>
        <position position="257"/>
    </location>
</feature>
<feature type="mutagenesis site" description="Loss of expression of the protein in part due to proteasomal degradation; when associated with Q-225 and Q-264." evidence="9">
    <original>K</original>
    <variation>R</variation>
    <location>
        <position position="257"/>
    </location>
</feature>
<feature type="mutagenesis site" description="Loss of acetylation; when associated with Q-225 and Q-257." evidence="9">
    <original>K</original>
    <variation>Q</variation>
    <location>
        <position position="264"/>
    </location>
</feature>
<feature type="mutagenesis site" description="Loss of expression of the protein in part due to proteasomal degradation; when associated with Q-225 and Q-257." evidence="9">
    <original>K</original>
    <variation>R</variation>
    <location>
        <position position="264"/>
    </location>
</feature>
<feature type="sequence conflict" description="In Ref. 1; AA sequence." evidence="16" ref="1">
    <original>D</original>
    <variation>A</variation>
    <location>
        <position position="200"/>
    </location>
</feature>
<feature type="sequence conflict" description="In Ref. 1; AA sequence." evidence="16" ref="1">
    <original>D</original>
    <variation>P</variation>
    <location>
        <position position="200"/>
    </location>
</feature>
<feature type="sequence conflict" description="In Ref. 1; AA sequence." evidence="16" ref="1">
    <original>S</original>
    <variation>D</variation>
    <location>
        <position position="284"/>
    </location>
</feature>
<feature type="sequence conflict" description="In Ref. 1; AA sequence." evidence="16" ref="1">
    <original>S</original>
    <variation>R</variation>
    <location>
        <position position="288"/>
    </location>
</feature>
<organism>
    <name type="scientific">Homo sapiens</name>
    <name type="common">Human</name>
    <dbReference type="NCBI Taxonomy" id="9606"/>
    <lineage>
        <taxon>Eukaryota</taxon>
        <taxon>Metazoa</taxon>
        <taxon>Chordata</taxon>
        <taxon>Craniata</taxon>
        <taxon>Vertebrata</taxon>
        <taxon>Euteleostomi</taxon>
        <taxon>Mammalia</taxon>
        <taxon>Eutheria</taxon>
        <taxon>Euarchontoglires</taxon>
        <taxon>Primates</taxon>
        <taxon>Haplorrhini</taxon>
        <taxon>Catarrhini</taxon>
        <taxon>Hominidae</taxon>
        <taxon>Homo</taxon>
    </lineage>
</organism>
<dbReference type="EMBL" id="AF027208">
    <property type="protein sequence ID" value="AAB92514.1"/>
    <property type="molecule type" value="mRNA"/>
</dbReference>
<dbReference type="EMBL" id="AF507034">
    <property type="protein sequence ID" value="AAM33415.1"/>
    <property type="molecule type" value="mRNA"/>
</dbReference>
<dbReference type="EMBL" id="AY449689">
    <property type="protein sequence ID" value="AAS19705.1"/>
    <property type="molecule type" value="mRNA"/>
</dbReference>
<dbReference type="EMBL" id="AY449690">
    <property type="protein sequence ID" value="AAS19706.1"/>
    <property type="molecule type" value="mRNA"/>
</dbReference>
<dbReference type="EMBL" id="AY449691">
    <property type="protein sequence ID" value="AAS19707.1"/>
    <property type="molecule type" value="mRNA"/>
</dbReference>
<dbReference type="EMBL" id="AY449692">
    <property type="protein sequence ID" value="AAS19708.1"/>
    <property type="molecule type" value="mRNA"/>
</dbReference>
<dbReference type="EMBL" id="AY449693">
    <property type="protein sequence ID" value="AAS19709.1"/>
    <property type="molecule type" value="mRNA"/>
</dbReference>
<dbReference type="EMBL" id="AF117225">
    <property type="protein sequence ID" value="AAO15307.1"/>
    <property type="molecule type" value="mRNA"/>
</dbReference>
<dbReference type="EMBL" id="AK027422">
    <property type="protein sequence ID" value="BAG51317.1"/>
    <property type="molecule type" value="mRNA"/>
</dbReference>
<dbReference type="EMBL" id="AC005598">
    <property type="status" value="NOT_ANNOTATED_CDS"/>
    <property type="molecule type" value="Genomic_DNA"/>
</dbReference>
<dbReference type="EMBL" id="AC108063">
    <property type="status" value="NOT_ANNOTATED_CDS"/>
    <property type="molecule type" value="Genomic_DNA"/>
</dbReference>
<dbReference type="EMBL" id="CH471069">
    <property type="protein sequence ID" value="EAW92750.1"/>
    <property type="molecule type" value="Genomic_DNA"/>
</dbReference>
<dbReference type="EMBL" id="BC012089">
    <property type="protein sequence ID" value="AAH12089.1"/>
    <property type="molecule type" value="mRNA"/>
</dbReference>
<dbReference type="CCDS" id="CCDS47029.1">
    <molecule id="O43490-1"/>
</dbReference>
<dbReference type="CCDS" id="CCDS54746.1">
    <molecule id="O43490-2"/>
</dbReference>
<dbReference type="CCDS" id="CCDS54747.1">
    <molecule id="O43490-6"/>
</dbReference>
<dbReference type="CCDS" id="CCDS54748.1">
    <molecule id="O43490-7"/>
</dbReference>
<dbReference type="CCDS" id="CCDS93482.1">
    <molecule id="O43490-5"/>
</dbReference>
<dbReference type="CCDS" id="CCDS93483.1">
    <molecule id="O43490-4"/>
</dbReference>
<dbReference type="PIR" id="T09050">
    <property type="entry name" value="T09050"/>
</dbReference>
<dbReference type="RefSeq" id="NP_001139319.1">
    <molecule id="O43490-2"/>
    <property type="nucleotide sequence ID" value="NM_001145847.2"/>
</dbReference>
<dbReference type="RefSeq" id="NP_001139320.1">
    <molecule id="O43490-2"/>
    <property type="nucleotide sequence ID" value="NM_001145848.2"/>
</dbReference>
<dbReference type="RefSeq" id="NP_001139321.1">
    <molecule id="O43490-7"/>
    <property type="nucleotide sequence ID" value="NM_001145849.2"/>
</dbReference>
<dbReference type="RefSeq" id="NP_001139322.1">
    <molecule id="O43490-6"/>
    <property type="nucleotide sequence ID" value="NM_001145850.2"/>
</dbReference>
<dbReference type="RefSeq" id="NP_001139323.1">
    <molecule id="O43490-4"/>
    <property type="nucleotide sequence ID" value="NM_001145851.2"/>
</dbReference>
<dbReference type="RefSeq" id="NP_001139324.1">
    <molecule id="O43490-5"/>
    <property type="nucleotide sequence ID" value="NM_001145852.2"/>
</dbReference>
<dbReference type="RefSeq" id="NP_001358335.1">
    <molecule id="O43490-2"/>
    <property type="nucleotide sequence ID" value="NM_001371406.1"/>
</dbReference>
<dbReference type="RefSeq" id="NP_001358336.1">
    <molecule id="O43490-5"/>
    <property type="nucleotide sequence ID" value="NM_001371407.1"/>
</dbReference>
<dbReference type="RefSeq" id="NP_001358337.1">
    <molecule id="O43490-5"/>
    <property type="nucleotide sequence ID" value="NM_001371408.1"/>
</dbReference>
<dbReference type="RefSeq" id="NP_006008.1">
    <molecule id="O43490-1"/>
    <property type="nucleotide sequence ID" value="NM_006017.3"/>
</dbReference>
<dbReference type="RefSeq" id="XP_005248252.1">
    <molecule id="O43490-4"/>
    <property type="nucleotide sequence ID" value="XM_005248195.6"/>
</dbReference>
<dbReference type="RefSeq" id="XP_005248253.1">
    <molecule id="O43490-5"/>
    <property type="nucleotide sequence ID" value="XM_005248196.6"/>
</dbReference>
<dbReference type="RefSeq" id="XP_011512192.1">
    <property type="nucleotide sequence ID" value="XM_011513890.1"/>
</dbReference>
<dbReference type="RefSeq" id="XP_011512194.1">
    <property type="nucleotide sequence ID" value="XM_011513892.2"/>
</dbReference>
<dbReference type="RefSeq" id="XP_011512195.1">
    <molecule id="O43490-1"/>
    <property type="nucleotide sequence ID" value="XM_011513893.3"/>
</dbReference>
<dbReference type="RefSeq" id="XP_011512196.1">
    <molecule id="O43490-1"/>
    <property type="nucleotide sequence ID" value="XM_011513894.4"/>
</dbReference>
<dbReference type="RefSeq" id="XP_011512197.1">
    <molecule id="O43490-1"/>
    <property type="nucleotide sequence ID" value="XM_011513895.3"/>
</dbReference>
<dbReference type="RefSeq" id="XP_011512198.1">
    <property type="nucleotide sequence ID" value="XM_011513896.2"/>
</dbReference>
<dbReference type="RefSeq" id="XP_011512199.1">
    <molecule id="O43490-1"/>
    <property type="nucleotide sequence ID" value="XM_011513897.4"/>
</dbReference>
<dbReference type="RefSeq" id="XP_011512201.2">
    <property type="nucleotide sequence ID" value="XM_011513899.2"/>
</dbReference>
<dbReference type="RefSeq" id="XP_011512202.1">
    <molecule id="O43490-7"/>
    <property type="nucleotide sequence ID" value="XM_011513900.3"/>
</dbReference>
<dbReference type="RefSeq" id="XP_011512204.1">
    <molecule id="O43490-6"/>
    <property type="nucleotide sequence ID" value="XM_011513902.3"/>
</dbReference>
<dbReference type="RefSeq" id="XP_016864288.1">
    <property type="nucleotide sequence ID" value="XM_017008799.1"/>
</dbReference>
<dbReference type="RefSeq" id="XP_016864291.1">
    <property type="nucleotide sequence ID" value="XM_017008802.1"/>
</dbReference>
<dbReference type="RefSeq" id="XP_016864292.1">
    <property type="nucleotide sequence ID" value="XM_017008803.1"/>
</dbReference>
<dbReference type="RefSeq" id="XP_016864293.1">
    <property type="nucleotide sequence ID" value="XM_017008804.1"/>
</dbReference>
<dbReference type="RefSeq" id="XP_016864294.1">
    <property type="nucleotide sequence ID" value="XM_017008805.1"/>
</dbReference>
<dbReference type="RefSeq" id="XP_047272326.1">
    <molecule id="O43490-2"/>
    <property type="nucleotide sequence ID" value="XM_047416370.1"/>
</dbReference>
<dbReference type="RefSeq" id="XP_047272328.1">
    <molecule id="O43490-2"/>
    <property type="nucleotide sequence ID" value="XM_047416372.1"/>
</dbReference>
<dbReference type="RefSeq" id="XP_047272329.1">
    <molecule id="O43490-2"/>
    <property type="nucleotide sequence ID" value="XM_047416373.1"/>
</dbReference>
<dbReference type="RefSeq" id="XP_047272330.1">
    <molecule id="O43490-2"/>
    <property type="nucleotide sequence ID" value="XM_047416374.1"/>
</dbReference>
<dbReference type="RefSeq" id="XP_047272331.1">
    <molecule id="O43490-2"/>
    <property type="nucleotide sequence ID" value="XM_047416375.1"/>
</dbReference>
<dbReference type="RefSeq" id="XP_047272332.1">
    <molecule id="O43490-7"/>
    <property type="nucleotide sequence ID" value="XM_047416376.1"/>
</dbReference>
<dbReference type="RefSeq" id="XP_047272333.1">
    <molecule id="O43490-6"/>
    <property type="nucleotide sequence ID" value="XM_047416377.1"/>
</dbReference>
<dbReference type="RefSeq" id="XP_047272334.1">
    <molecule id="O43490-4"/>
    <property type="nucleotide sequence ID" value="XM_047416378.1"/>
</dbReference>
<dbReference type="RefSeq" id="XP_047272335.1">
    <molecule id="O43490-4"/>
    <property type="nucleotide sequence ID" value="XM_047416379.1"/>
</dbReference>
<dbReference type="RefSeq" id="XP_054207135.1">
    <molecule id="O43490-1"/>
    <property type="nucleotide sequence ID" value="XM_054351160.1"/>
</dbReference>
<dbReference type="RefSeq" id="XP_054207136.1">
    <molecule id="O43490-1"/>
    <property type="nucleotide sequence ID" value="XM_054351161.1"/>
</dbReference>
<dbReference type="RefSeq" id="XP_054207137.1">
    <molecule id="O43490-1"/>
    <property type="nucleotide sequence ID" value="XM_054351162.1"/>
</dbReference>
<dbReference type="RefSeq" id="XP_054207138.1">
    <molecule id="O43490-1"/>
    <property type="nucleotide sequence ID" value="XM_054351163.1"/>
</dbReference>
<dbReference type="RefSeq" id="XP_054207139.1">
    <molecule id="O43490-1"/>
    <property type="nucleotide sequence ID" value="XM_054351164.1"/>
</dbReference>
<dbReference type="RefSeq" id="XP_054207140.1">
    <molecule id="O43490-1"/>
    <property type="nucleotide sequence ID" value="XM_054351165.1"/>
</dbReference>
<dbReference type="RefSeq" id="XP_054207141.1">
    <molecule id="O43490-1"/>
    <property type="nucleotide sequence ID" value="XM_054351166.1"/>
</dbReference>
<dbReference type="RefSeq" id="XP_054207142.1">
    <molecule id="O43490-2"/>
    <property type="nucleotide sequence ID" value="XM_054351167.1"/>
</dbReference>
<dbReference type="RefSeq" id="XP_054207143.1">
    <molecule id="O43490-2"/>
    <property type="nucleotide sequence ID" value="XM_054351168.1"/>
</dbReference>
<dbReference type="RefSeq" id="XP_054207144.1">
    <molecule id="O43490-2"/>
    <property type="nucleotide sequence ID" value="XM_054351169.1"/>
</dbReference>
<dbReference type="RefSeq" id="XP_054207145.1">
    <molecule id="O43490-2"/>
    <property type="nucleotide sequence ID" value="XM_054351170.1"/>
</dbReference>
<dbReference type="RefSeq" id="XP_054207146.1">
    <molecule id="O43490-2"/>
    <property type="nucleotide sequence ID" value="XM_054351171.1"/>
</dbReference>
<dbReference type="RefSeq" id="XP_054207147.1">
    <molecule id="O43490-2"/>
    <property type="nucleotide sequence ID" value="XM_054351172.1"/>
</dbReference>
<dbReference type="RefSeq" id="XP_054207148.1">
    <molecule id="O43490-7"/>
    <property type="nucleotide sequence ID" value="XM_054351173.1"/>
</dbReference>
<dbReference type="RefSeq" id="XP_054207149.1">
    <molecule id="O43490-7"/>
    <property type="nucleotide sequence ID" value="XM_054351174.1"/>
</dbReference>
<dbReference type="RefSeq" id="XP_054207151.1">
    <molecule id="O43490-6"/>
    <property type="nucleotide sequence ID" value="XM_054351176.1"/>
</dbReference>
<dbReference type="RefSeq" id="XP_054207152.1">
    <molecule id="O43490-6"/>
    <property type="nucleotide sequence ID" value="XM_054351177.1"/>
</dbReference>
<dbReference type="RefSeq" id="XP_054207153.1">
    <molecule id="O43490-4"/>
    <property type="nucleotide sequence ID" value="XM_054351178.1"/>
</dbReference>
<dbReference type="RefSeq" id="XP_054207154.1">
    <molecule id="O43490-4"/>
    <property type="nucleotide sequence ID" value="XM_054351179.1"/>
</dbReference>
<dbReference type="RefSeq" id="XP_054207155.1">
    <molecule id="O43490-4"/>
    <property type="nucleotide sequence ID" value="XM_054351180.1"/>
</dbReference>
<dbReference type="RefSeq" id="XP_054207156.1">
    <molecule id="O43490-4"/>
    <property type="nucleotide sequence ID" value="XM_054351181.1"/>
</dbReference>
<dbReference type="RefSeq" id="XP_054207157.1">
    <molecule id="O43490-5"/>
    <property type="nucleotide sequence ID" value="XM_054351182.1"/>
</dbReference>
<dbReference type="RefSeq" id="XP_054207158.1">
    <molecule id="O43490-5"/>
    <property type="nucleotide sequence ID" value="XM_054351183.1"/>
</dbReference>
<dbReference type="SMR" id="O43490"/>
<dbReference type="BioGRID" id="114369">
    <property type="interactions" value="21"/>
</dbReference>
<dbReference type="CORUM" id="O43490"/>
<dbReference type="FunCoup" id="O43490">
    <property type="interactions" value="631"/>
</dbReference>
<dbReference type="IntAct" id="O43490">
    <property type="interactions" value="36"/>
</dbReference>
<dbReference type="STRING" id="9606.ENSP00000426809"/>
<dbReference type="TCDB" id="9.B.411.1.1">
    <property type="family name" value="the prominin (prominin) family"/>
</dbReference>
<dbReference type="GlyConnect" id="1642">
    <property type="glycosylation" value="16 N-Linked glycans (2 sites)"/>
</dbReference>
<dbReference type="GlyCosmos" id="O43490">
    <property type="glycosylation" value="8 sites, 15 glycans"/>
</dbReference>
<dbReference type="GlyGen" id="O43490">
    <property type="glycosylation" value="10 sites, 40 N-linked glycans (3 sites)"/>
</dbReference>
<dbReference type="iPTMnet" id="O43490"/>
<dbReference type="PhosphoSitePlus" id="O43490"/>
<dbReference type="SwissPalm" id="O43490"/>
<dbReference type="BioMuta" id="PROM1"/>
<dbReference type="jPOST" id="O43490"/>
<dbReference type="MassIVE" id="O43490"/>
<dbReference type="PaxDb" id="9606-ENSP00000426809"/>
<dbReference type="PeptideAtlas" id="O43490"/>
<dbReference type="ProteomicsDB" id="48967">
    <molecule id="O43490-1"/>
</dbReference>
<dbReference type="ProteomicsDB" id="48968">
    <molecule id="O43490-2"/>
</dbReference>
<dbReference type="ProteomicsDB" id="48969">
    <molecule id="O43490-3"/>
</dbReference>
<dbReference type="ProteomicsDB" id="48970">
    <molecule id="O43490-4"/>
</dbReference>
<dbReference type="ProteomicsDB" id="48971">
    <molecule id="O43490-5"/>
</dbReference>
<dbReference type="ProteomicsDB" id="48972">
    <molecule id="O43490-6"/>
</dbReference>
<dbReference type="ProteomicsDB" id="48973">
    <molecule id="O43490-7"/>
</dbReference>
<dbReference type="Pumba" id="O43490"/>
<dbReference type="ABCD" id="O43490">
    <property type="antibodies" value="12 sequenced antibodies"/>
</dbReference>
<dbReference type="Antibodypedia" id="1554">
    <property type="antibodies" value="795 antibodies from 43 providers"/>
</dbReference>
<dbReference type="CPTC" id="O43490">
    <property type="antibodies" value="2 antibodies"/>
</dbReference>
<dbReference type="DNASU" id="8842"/>
<dbReference type="Ensembl" id="ENST00000447510.7">
    <molecule id="O43490-1"/>
    <property type="protein sequence ID" value="ENSP00000415481.2"/>
    <property type="gene ID" value="ENSG00000007062.12"/>
</dbReference>
<dbReference type="Ensembl" id="ENST00000505450.5">
    <molecule id="O43490-2"/>
    <property type="protein sequence ID" value="ENSP00000426090.1"/>
    <property type="gene ID" value="ENSG00000007062.12"/>
</dbReference>
<dbReference type="Ensembl" id="ENST00000508167.5">
    <molecule id="O43490-2"/>
    <property type="protein sequence ID" value="ENSP00000427346.1"/>
    <property type="gene ID" value="ENSG00000007062.12"/>
</dbReference>
<dbReference type="Ensembl" id="ENST00000510224.5">
    <molecule id="O43490-1"/>
    <property type="protein sequence ID" value="ENSP00000426809.1"/>
    <property type="gene ID" value="ENSG00000007062.12"/>
</dbReference>
<dbReference type="Ensembl" id="ENST00000539194.6">
    <molecule id="O43490-6"/>
    <property type="protein sequence ID" value="ENSP00000443620.1"/>
    <property type="gene ID" value="ENSG00000007062.12"/>
</dbReference>
<dbReference type="Ensembl" id="ENST00000540805.6">
    <molecule id="O43490-4"/>
    <property type="protein sequence ID" value="ENSP00000438045.2"/>
    <property type="gene ID" value="ENSG00000007062.12"/>
</dbReference>
<dbReference type="Ensembl" id="ENST00000675377.1">
    <molecule id="O43490-7"/>
    <property type="protein sequence ID" value="ENSP00000502545.1"/>
    <property type="gene ID" value="ENSG00000007062.12"/>
</dbReference>
<dbReference type="Ensembl" id="ENST00000675613.1">
    <molecule id="O43490-5"/>
    <property type="protein sequence ID" value="ENSP00000501741.1"/>
    <property type="gene ID" value="ENSG00000007062.12"/>
</dbReference>
<dbReference type="GeneID" id="8842"/>
<dbReference type="KEGG" id="hsa:8842"/>
<dbReference type="MANE-Select" id="ENST00000447510.7">
    <property type="protein sequence ID" value="ENSP00000415481.2"/>
    <property type="RefSeq nucleotide sequence ID" value="NM_006017.3"/>
    <property type="RefSeq protein sequence ID" value="NP_006008.1"/>
</dbReference>
<dbReference type="UCSC" id="uc003goo.2">
    <molecule id="O43490-1"/>
    <property type="organism name" value="human"/>
</dbReference>
<dbReference type="AGR" id="HGNC:9454"/>
<dbReference type="CTD" id="8842"/>
<dbReference type="DisGeNET" id="8842"/>
<dbReference type="GeneCards" id="PROM1"/>
<dbReference type="GeneReviews" id="PROM1"/>
<dbReference type="HGNC" id="HGNC:9454">
    <property type="gene designation" value="PROM1"/>
</dbReference>
<dbReference type="HPA" id="ENSG00000007062">
    <property type="expression patterns" value="Tissue enriched (retina)"/>
</dbReference>
<dbReference type="MalaCards" id="PROM1"/>
<dbReference type="MIM" id="603786">
    <property type="type" value="phenotype"/>
</dbReference>
<dbReference type="MIM" id="604365">
    <property type="type" value="gene"/>
</dbReference>
<dbReference type="MIM" id="608051">
    <property type="type" value="phenotype"/>
</dbReference>
<dbReference type="MIM" id="612095">
    <property type="type" value="phenotype"/>
</dbReference>
<dbReference type="MIM" id="612657">
    <property type="type" value="phenotype"/>
</dbReference>
<dbReference type="neXtProt" id="NX_O43490"/>
<dbReference type="OpenTargets" id="ENSG00000007062"/>
<dbReference type="Orphanet" id="1872">
    <property type="disease" value="Cone rod dystrophy"/>
</dbReference>
<dbReference type="Orphanet" id="319640">
    <property type="disease" value="Retinal macular dystrophy type 2"/>
</dbReference>
<dbReference type="Orphanet" id="791">
    <property type="disease" value="Retinitis pigmentosa"/>
</dbReference>
<dbReference type="Orphanet" id="827">
    <property type="disease" value="Stargardt disease"/>
</dbReference>
<dbReference type="PharmGKB" id="PA33807"/>
<dbReference type="VEuPathDB" id="HostDB:ENSG00000007062"/>
<dbReference type="eggNOG" id="KOG4331">
    <property type="taxonomic scope" value="Eukaryota"/>
</dbReference>
<dbReference type="GeneTree" id="ENSGT00530000063586"/>
<dbReference type="HOGENOM" id="CLU_008293_0_0_1"/>
<dbReference type="InParanoid" id="O43490"/>
<dbReference type="OMA" id="FEQYSVW"/>
<dbReference type="OrthoDB" id="6229420at2759"/>
<dbReference type="PAN-GO" id="O43490">
    <property type="GO annotations" value="9 GO annotations based on evolutionary models"/>
</dbReference>
<dbReference type="PhylomeDB" id="O43490"/>
<dbReference type="TreeFam" id="TF324631"/>
<dbReference type="PathwayCommons" id="O43490"/>
<dbReference type="SignaLink" id="O43490"/>
<dbReference type="SIGNOR" id="O43490"/>
<dbReference type="BioGRID-ORCS" id="8842">
    <property type="hits" value="17 hits in 1149 CRISPR screens"/>
</dbReference>
<dbReference type="ChiTaRS" id="PROM1">
    <property type="organism name" value="human"/>
</dbReference>
<dbReference type="GeneWiki" id="CD133"/>
<dbReference type="GenomeRNAi" id="8842"/>
<dbReference type="Pharos" id="O43490">
    <property type="development level" value="Tbio"/>
</dbReference>
<dbReference type="PRO" id="PR:O43490"/>
<dbReference type="Proteomes" id="UP000005640">
    <property type="component" value="Chromosome 4"/>
</dbReference>
<dbReference type="RNAct" id="O43490">
    <property type="molecule type" value="protein"/>
</dbReference>
<dbReference type="Bgee" id="ENSG00000007062">
    <property type="expression patterns" value="Expressed in bronchial epithelial cell and 182 other cell types or tissues"/>
</dbReference>
<dbReference type="ExpressionAtlas" id="O43490">
    <property type="expression patterns" value="baseline and differential"/>
</dbReference>
<dbReference type="GO" id="GO:0016324">
    <property type="term" value="C:apical plasma membrane"/>
    <property type="evidence" value="ECO:0007669"/>
    <property type="project" value="UniProtKB-SubCell"/>
</dbReference>
<dbReference type="GO" id="GO:0009986">
    <property type="term" value="C:cell surface"/>
    <property type="evidence" value="ECO:0000314"/>
    <property type="project" value="BHF-UCL"/>
</dbReference>
<dbReference type="GO" id="GO:0005929">
    <property type="term" value="C:cilium"/>
    <property type="evidence" value="ECO:0000318"/>
    <property type="project" value="GO_Central"/>
</dbReference>
<dbReference type="GO" id="GO:0005783">
    <property type="term" value="C:endoplasmic reticulum"/>
    <property type="evidence" value="ECO:0000314"/>
    <property type="project" value="UniProtKB"/>
</dbReference>
<dbReference type="GO" id="GO:0005793">
    <property type="term" value="C:endoplasmic reticulum-Golgi intermediate compartment"/>
    <property type="evidence" value="ECO:0000314"/>
    <property type="project" value="UniProtKB"/>
</dbReference>
<dbReference type="GO" id="GO:0070062">
    <property type="term" value="C:extracellular exosome"/>
    <property type="evidence" value="ECO:0000314"/>
    <property type="project" value="UniProtKB"/>
</dbReference>
<dbReference type="GO" id="GO:0005615">
    <property type="term" value="C:extracellular space"/>
    <property type="evidence" value="ECO:0007005"/>
    <property type="project" value="UniProtKB"/>
</dbReference>
<dbReference type="GO" id="GO:0005902">
    <property type="term" value="C:microvillus"/>
    <property type="evidence" value="ECO:0000318"/>
    <property type="project" value="GO_Central"/>
</dbReference>
<dbReference type="GO" id="GO:0031528">
    <property type="term" value="C:microvillus membrane"/>
    <property type="evidence" value="ECO:0007669"/>
    <property type="project" value="UniProtKB-SubCell"/>
</dbReference>
<dbReference type="GO" id="GO:0001750">
    <property type="term" value="C:photoreceptor outer segment"/>
    <property type="evidence" value="ECO:0000250"/>
    <property type="project" value="UniProtKB"/>
</dbReference>
<dbReference type="GO" id="GO:0042622">
    <property type="term" value="C:photoreceptor outer segment membrane"/>
    <property type="evidence" value="ECO:0000314"/>
    <property type="project" value="BHF-UCL"/>
</dbReference>
<dbReference type="GO" id="GO:0005886">
    <property type="term" value="C:plasma membrane"/>
    <property type="evidence" value="ECO:0000314"/>
    <property type="project" value="UniProtKB"/>
</dbReference>
<dbReference type="GO" id="GO:0071914">
    <property type="term" value="C:prominosome"/>
    <property type="evidence" value="ECO:0000318"/>
    <property type="project" value="GO_Central"/>
</dbReference>
<dbReference type="GO" id="GO:0031982">
    <property type="term" value="C:vesicle"/>
    <property type="evidence" value="ECO:0007005"/>
    <property type="project" value="UniProtKB"/>
</dbReference>
<dbReference type="GO" id="GO:0042805">
    <property type="term" value="F:actinin binding"/>
    <property type="evidence" value="ECO:0000314"/>
    <property type="project" value="BHF-UCL"/>
</dbReference>
<dbReference type="GO" id="GO:0045296">
    <property type="term" value="F:cadherin binding"/>
    <property type="evidence" value="ECO:0000353"/>
    <property type="project" value="BHF-UCL"/>
</dbReference>
<dbReference type="GO" id="GO:0015485">
    <property type="term" value="F:cholesterol binding"/>
    <property type="evidence" value="ECO:0000318"/>
    <property type="project" value="GO_Central"/>
</dbReference>
<dbReference type="GO" id="GO:0060219">
    <property type="term" value="P:camera-type eye photoreceptor cell differentiation"/>
    <property type="evidence" value="ECO:0000315"/>
    <property type="project" value="BHF-UCL"/>
</dbReference>
<dbReference type="GO" id="GO:0072139">
    <property type="term" value="P:glomerular parietal epithelial cell differentiation"/>
    <property type="evidence" value="ECO:0000315"/>
    <property type="project" value="UniProtKB"/>
</dbReference>
<dbReference type="GO" id="GO:0045494">
    <property type="term" value="P:photoreceptor cell maintenance"/>
    <property type="evidence" value="ECO:0000315"/>
    <property type="project" value="BHF-UCL"/>
</dbReference>
<dbReference type="GO" id="GO:0072112">
    <property type="term" value="P:podocyte differentiation"/>
    <property type="evidence" value="ECO:0000315"/>
    <property type="project" value="UniProtKB"/>
</dbReference>
<dbReference type="GO" id="GO:2000768">
    <property type="term" value="P:positive regulation of nephron tubule epithelial cell differentiation"/>
    <property type="evidence" value="ECO:0000315"/>
    <property type="project" value="UniProtKB"/>
</dbReference>
<dbReference type="GO" id="GO:0010842">
    <property type="term" value="P:retina layer formation"/>
    <property type="evidence" value="ECO:0000250"/>
    <property type="project" value="UniProtKB"/>
</dbReference>
<dbReference type="GO" id="GO:0060042">
    <property type="term" value="P:retina morphogenesis in camera-type eye"/>
    <property type="evidence" value="ECO:0000315"/>
    <property type="project" value="BHF-UCL"/>
</dbReference>
<dbReference type="InterPro" id="IPR008795">
    <property type="entry name" value="Prominin"/>
</dbReference>
<dbReference type="PANTHER" id="PTHR22730">
    <property type="entry name" value="PROMININ PROM PROTEIN"/>
    <property type="match status" value="1"/>
</dbReference>
<dbReference type="PANTHER" id="PTHR22730:SF3">
    <property type="entry name" value="PROMININ-1"/>
    <property type="match status" value="1"/>
</dbReference>
<dbReference type="Pfam" id="PF05478">
    <property type="entry name" value="Prominin"/>
    <property type="match status" value="1"/>
</dbReference>
<gene>
    <name type="primary">PROM1</name>
    <name type="synonym">PROML1</name>
    <name type="ORF">MSTP061</name>
</gene>
<accession>O43490</accession>
<accession>Q6SV49</accession>
<accession>Q6SV50</accession>
<accession>Q6SV51</accession>
<accession>Q6SV52</accession>
<accession>Q6SV53</accession>
<accession>Q96EN6</accession>
<sequence length="865" mass="97202">MALVLGSLLLLGLCGNSFSGGQPSSTDAPKAWNYELPATNYETQDSHKAGPIGILFELVHIFLYVVQPRDFPEDTLRKFLQKAYESKIDYDKPETVILGLKIVYYEAGIILCCVLGLLFIILMPLVGYFFCMCRCCNKCGGEMHQRQKENGPFLRKCFAISLLVICIIISIGIFYGFVANHQVRTRIKRSRKLADSNFKDLRTLLNETPEQIKYILAQYNTTKDKAFTDLNSINSVLGGGILDRLRPNIIPVLDEIKSMATAIKETKEALENMNSTLKSLHQQSTQLSSSLTSVKTSLRSSLNDPLCLVHPSSETCNSIRLSLSQLNSNPELRQLPPVDAELDNVNNVLRTDLDGLVQQGYQSLNDIPDRVQRQTTTVVAGIKRVLNSIGSDIDNVTQRLPIQDILSAFSVYVNNTESYIHRNLPTLEEYDSYWWLGGLVICSLLTLIVIFYYLGLLCGVCGYDRHATPTTRGCVSNTGGVFLMVGVGLSFLFCWILMIIVVLTFVFGANVEKLICEPYTSKELFRVLDTPYLLNEDWEYYLSGKLFNKSKMKLTFEQVYSDCKKNRGTYGTLHLQNSFNISEHLNINEHTGSISSELESLKVNLNIFLLGAAGRKNLQDFAACGIDRMNYDSYLAQTGKSPAGVNLLSFAYDLEAKANSLPPGNLRNSLKRDAQTIKTIHQQRVLPIEQSLSTLYQSVKILQRTGNGLLERVTRILASLDFAQNFITNNTSSVIIEETKKYGRTIIGYFEHYLQWIEFSISEKVASCKPVATALDTAVDVFLCSYIIDPLNLFWFGIGKATVFLLPALIFAVKLAKYYRRMDSEDVYDDVETIPMKNMENGNNGYHKDHVYGIHNPVMTSPSQH</sequence>
<reference key="1">
    <citation type="journal article" date="1997" name="Blood">
        <title>A novel five-transmembrane hematopoietic stem cell antigen: isolation, characterization, and molecular cloning.</title>
        <authorList>
            <person name="Miraglia S."/>
            <person name="Godfrey W."/>
            <person name="Yin A.H."/>
            <person name="Atkins K."/>
            <person name="Warnke R."/>
            <person name="Holden J.T."/>
            <person name="Bray R.A."/>
            <person name="Waller E.K."/>
            <person name="Buck D.W."/>
        </authorList>
    </citation>
    <scope>NUCLEOTIDE SEQUENCE [MRNA] (ISOFORM 1)</scope>
    <scope>PROTEIN SEQUENCE OF 31-42; 200-211; 280-291 AND 641-656</scope>
    <source>
        <tissue>Fetal liver</tissue>
        <tissue>Retinoblastoma</tissue>
    </source>
</reference>
<reference key="2">
    <citation type="journal article" date="2002" name="J. Biol. Chem.">
        <title>AC133-2, a novel isoform of human AC133 stem cell antigen.</title>
        <authorList>
            <person name="Yu Y."/>
            <person name="Flint A."/>
            <person name="Dvorin E.L."/>
            <person name="Bischoff J."/>
        </authorList>
    </citation>
    <scope>NUCLEOTIDE SEQUENCE [MRNA] (ISOFORM 2)</scope>
    <scope>SUBCELLULAR LOCATION</scope>
    <scope>TISSUE SPECIFICITY</scope>
    <scope>GLYCOSYLATION</scope>
</reference>
<reference key="3">
    <citation type="submission" date="2003-10" db="EMBL/GenBank/DDBJ databases">
        <title>Identification and functional analysis of several isoforms of hematopoitic stem cell surface maker prominin-1 (AC133).</title>
        <authorList>
            <person name="Lin J."/>
            <person name="Shmelkov S.V."/>
            <person name="Karajannis M.A."/>
            <person name="StClair R."/>
            <person name="Walsh K."/>
            <person name="Gordon R."/>
            <person name="Shido K."/>
            <person name="Lam G."/>
            <person name="Moussazadeh N."/>
            <person name="Shim W."/>
            <person name="Rafii S."/>
        </authorList>
    </citation>
    <scope>NUCLEOTIDE SEQUENCE [MRNA] (ISOFORM 3)</scope>
</reference>
<reference key="4">
    <citation type="submission" date="1998-12" db="EMBL/GenBank/DDBJ databases">
        <authorList>
            <person name="Wang X.Y."/>
            <person name="Zhao B."/>
            <person name="Liu B."/>
            <person name="Xu Y.Y."/>
            <person name="Liu Y.Q."/>
            <person name="Cao H.Q."/>
            <person name="Sheng H."/>
            <person name="Ye J."/>
            <person name="Song L."/>
            <person name="Wei Y.J."/>
            <person name="Liu S."/>
            <person name="Liu L.S."/>
            <person name="Ding J.F."/>
            <person name="Gao R.L."/>
            <person name="Wu Q.Y."/>
            <person name="Qiang B.Q."/>
            <person name="Yuan J.G."/>
            <person name="Liew C.C."/>
            <person name="Zhao M.S."/>
            <person name="Hui R.T."/>
        </authorList>
    </citation>
    <scope>NUCLEOTIDE SEQUENCE [LARGE SCALE MRNA] (ISOFORM 2)</scope>
    <source>
        <tissue>Aorta</tissue>
    </source>
</reference>
<reference key="5">
    <citation type="journal article" date="2004" name="Nat. Genet.">
        <title>Complete sequencing and characterization of 21,243 full-length human cDNAs.</title>
        <authorList>
            <person name="Ota T."/>
            <person name="Suzuki Y."/>
            <person name="Nishikawa T."/>
            <person name="Otsuki T."/>
            <person name="Sugiyama T."/>
            <person name="Irie R."/>
            <person name="Wakamatsu A."/>
            <person name="Hayashi K."/>
            <person name="Sato H."/>
            <person name="Nagai K."/>
            <person name="Kimura K."/>
            <person name="Makita H."/>
            <person name="Sekine M."/>
            <person name="Obayashi M."/>
            <person name="Nishi T."/>
            <person name="Shibahara T."/>
            <person name="Tanaka T."/>
            <person name="Ishii S."/>
            <person name="Yamamoto J."/>
            <person name="Saito K."/>
            <person name="Kawai Y."/>
            <person name="Isono Y."/>
            <person name="Nakamura Y."/>
            <person name="Nagahari K."/>
            <person name="Murakami K."/>
            <person name="Yasuda T."/>
            <person name="Iwayanagi T."/>
            <person name="Wagatsuma M."/>
            <person name="Shiratori A."/>
            <person name="Sudo H."/>
            <person name="Hosoiri T."/>
            <person name="Kaku Y."/>
            <person name="Kodaira H."/>
            <person name="Kondo H."/>
            <person name="Sugawara M."/>
            <person name="Takahashi M."/>
            <person name="Kanda K."/>
            <person name="Yokoi T."/>
            <person name="Furuya T."/>
            <person name="Kikkawa E."/>
            <person name="Omura Y."/>
            <person name="Abe K."/>
            <person name="Kamihara K."/>
            <person name="Katsuta N."/>
            <person name="Sato K."/>
            <person name="Tanikawa M."/>
            <person name="Yamazaki M."/>
            <person name="Ninomiya K."/>
            <person name="Ishibashi T."/>
            <person name="Yamashita H."/>
            <person name="Murakawa K."/>
            <person name="Fujimori K."/>
            <person name="Tanai H."/>
            <person name="Kimata M."/>
            <person name="Watanabe M."/>
            <person name="Hiraoka S."/>
            <person name="Chiba Y."/>
            <person name="Ishida S."/>
            <person name="Ono Y."/>
            <person name="Takiguchi S."/>
            <person name="Watanabe S."/>
            <person name="Yosida M."/>
            <person name="Hotuta T."/>
            <person name="Kusano J."/>
            <person name="Kanehori K."/>
            <person name="Takahashi-Fujii A."/>
            <person name="Hara H."/>
            <person name="Tanase T.-O."/>
            <person name="Nomura Y."/>
            <person name="Togiya S."/>
            <person name="Komai F."/>
            <person name="Hara R."/>
            <person name="Takeuchi K."/>
            <person name="Arita M."/>
            <person name="Imose N."/>
            <person name="Musashino K."/>
            <person name="Yuuki H."/>
            <person name="Oshima A."/>
            <person name="Sasaki N."/>
            <person name="Aotsuka S."/>
            <person name="Yoshikawa Y."/>
            <person name="Matsunawa H."/>
            <person name="Ichihara T."/>
            <person name="Shiohata N."/>
            <person name="Sano S."/>
            <person name="Moriya S."/>
            <person name="Momiyama H."/>
            <person name="Satoh N."/>
            <person name="Takami S."/>
            <person name="Terashima Y."/>
            <person name="Suzuki O."/>
            <person name="Nakagawa S."/>
            <person name="Senoh A."/>
            <person name="Mizoguchi H."/>
            <person name="Goto Y."/>
            <person name="Shimizu F."/>
            <person name="Wakebe H."/>
            <person name="Hishigaki H."/>
            <person name="Watanabe T."/>
            <person name="Sugiyama A."/>
            <person name="Takemoto M."/>
            <person name="Kawakami B."/>
            <person name="Yamazaki M."/>
            <person name="Watanabe K."/>
            <person name="Kumagai A."/>
            <person name="Itakura S."/>
            <person name="Fukuzumi Y."/>
            <person name="Fujimori Y."/>
            <person name="Komiyama M."/>
            <person name="Tashiro H."/>
            <person name="Tanigami A."/>
            <person name="Fujiwara T."/>
            <person name="Ono T."/>
            <person name="Yamada K."/>
            <person name="Fujii Y."/>
            <person name="Ozaki K."/>
            <person name="Hirao M."/>
            <person name="Ohmori Y."/>
            <person name="Kawabata A."/>
            <person name="Hikiji T."/>
            <person name="Kobatake N."/>
            <person name="Inagaki H."/>
            <person name="Ikema Y."/>
            <person name="Okamoto S."/>
            <person name="Okitani R."/>
            <person name="Kawakami T."/>
            <person name="Noguchi S."/>
            <person name="Itoh T."/>
            <person name="Shigeta K."/>
            <person name="Senba T."/>
            <person name="Matsumura K."/>
            <person name="Nakajima Y."/>
            <person name="Mizuno T."/>
            <person name="Morinaga M."/>
            <person name="Sasaki M."/>
            <person name="Togashi T."/>
            <person name="Oyama M."/>
            <person name="Hata H."/>
            <person name="Watanabe M."/>
            <person name="Komatsu T."/>
            <person name="Mizushima-Sugano J."/>
            <person name="Satoh T."/>
            <person name="Shirai Y."/>
            <person name="Takahashi Y."/>
            <person name="Nakagawa K."/>
            <person name="Okumura K."/>
            <person name="Nagase T."/>
            <person name="Nomura N."/>
            <person name="Kikuchi H."/>
            <person name="Masuho Y."/>
            <person name="Yamashita R."/>
            <person name="Nakai K."/>
            <person name="Yada T."/>
            <person name="Nakamura Y."/>
            <person name="Ohara O."/>
            <person name="Isogai T."/>
            <person name="Sugano S."/>
        </authorList>
    </citation>
    <scope>NUCLEOTIDE SEQUENCE [LARGE SCALE MRNA] (ISOFORM 2)</scope>
</reference>
<reference key="6">
    <citation type="journal article" date="2005" name="Nature">
        <title>Generation and annotation of the DNA sequences of human chromosomes 2 and 4.</title>
        <authorList>
            <person name="Hillier L.W."/>
            <person name="Graves T.A."/>
            <person name="Fulton R.S."/>
            <person name="Fulton L.A."/>
            <person name="Pepin K.H."/>
            <person name="Minx P."/>
            <person name="Wagner-McPherson C."/>
            <person name="Layman D."/>
            <person name="Wylie K."/>
            <person name="Sekhon M."/>
            <person name="Becker M.C."/>
            <person name="Fewell G.A."/>
            <person name="Delehaunty K.D."/>
            <person name="Miner T.L."/>
            <person name="Nash W.E."/>
            <person name="Kremitzki C."/>
            <person name="Oddy L."/>
            <person name="Du H."/>
            <person name="Sun H."/>
            <person name="Bradshaw-Cordum H."/>
            <person name="Ali J."/>
            <person name="Carter J."/>
            <person name="Cordes M."/>
            <person name="Harris A."/>
            <person name="Isak A."/>
            <person name="van Brunt A."/>
            <person name="Nguyen C."/>
            <person name="Du F."/>
            <person name="Courtney L."/>
            <person name="Kalicki J."/>
            <person name="Ozersky P."/>
            <person name="Abbott S."/>
            <person name="Armstrong J."/>
            <person name="Belter E.A."/>
            <person name="Caruso L."/>
            <person name="Cedroni M."/>
            <person name="Cotton M."/>
            <person name="Davidson T."/>
            <person name="Desai A."/>
            <person name="Elliott G."/>
            <person name="Erb T."/>
            <person name="Fronick C."/>
            <person name="Gaige T."/>
            <person name="Haakenson W."/>
            <person name="Haglund K."/>
            <person name="Holmes A."/>
            <person name="Harkins R."/>
            <person name="Kim K."/>
            <person name="Kruchowski S.S."/>
            <person name="Strong C.M."/>
            <person name="Grewal N."/>
            <person name="Goyea E."/>
            <person name="Hou S."/>
            <person name="Levy A."/>
            <person name="Martinka S."/>
            <person name="Mead K."/>
            <person name="McLellan M.D."/>
            <person name="Meyer R."/>
            <person name="Randall-Maher J."/>
            <person name="Tomlinson C."/>
            <person name="Dauphin-Kohlberg S."/>
            <person name="Kozlowicz-Reilly A."/>
            <person name="Shah N."/>
            <person name="Swearengen-Shahid S."/>
            <person name="Snider J."/>
            <person name="Strong J.T."/>
            <person name="Thompson J."/>
            <person name="Yoakum M."/>
            <person name="Leonard S."/>
            <person name="Pearman C."/>
            <person name="Trani L."/>
            <person name="Radionenko M."/>
            <person name="Waligorski J.E."/>
            <person name="Wang C."/>
            <person name="Rock S.M."/>
            <person name="Tin-Wollam A.-M."/>
            <person name="Maupin R."/>
            <person name="Latreille P."/>
            <person name="Wendl M.C."/>
            <person name="Yang S.-P."/>
            <person name="Pohl C."/>
            <person name="Wallis J.W."/>
            <person name="Spieth J."/>
            <person name="Bieri T.A."/>
            <person name="Berkowicz N."/>
            <person name="Nelson J.O."/>
            <person name="Osborne J."/>
            <person name="Ding L."/>
            <person name="Meyer R."/>
            <person name="Sabo A."/>
            <person name="Shotland Y."/>
            <person name="Sinha P."/>
            <person name="Wohldmann P.E."/>
            <person name="Cook L.L."/>
            <person name="Hickenbotham M.T."/>
            <person name="Eldred J."/>
            <person name="Williams D."/>
            <person name="Jones T.A."/>
            <person name="She X."/>
            <person name="Ciccarelli F.D."/>
            <person name="Izaurralde E."/>
            <person name="Taylor J."/>
            <person name="Schmutz J."/>
            <person name="Myers R.M."/>
            <person name="Cox D.R."/>
            <person name="Huang X."/>
            <person name="McPherson J.D."/>
            <person name="Mardis E.R."/>
            <person name="Clifton S.W."/>
            <person name="Warren W.C."/>
            <person name="Chinwalla A.T."/>
            <person name="Eddy S.R."/>
            <person name="Marra M.A."/>
            <person name="Ovcharenko I."/>
            <person name="Furey T.S."/>
            <person name="Miller W."/>
            <person name="Eichler E.E."/>
            <person name="Bork P."/>
            <person name="Suyama M."/>
            <person name="Torrents D."/>
            <person name="Waterston R.H."/>
            <person name="Wilson R.K."/>
        </authorList>
    </citation>
    <scope>NUCLEOTIDE SEQUENCE [LARGE SCALE GENOMIC DNA]</scope>
</reference>
<reference key="7">
    <citation type="submission" date="2005-07" db="EMBL/GenBank/DDBJ databases">
        <authorList>
            <person name="Mural R.J."/>
            <person name="Istrail S."/>
            <person name="Sutton G.G."/>
            <person name="Florea L."/>
            <person name="Halpern A.L."/>
            <person name="Mobarry C.M."/>
            <person name="Lippert R."/>
            <person name="Walenz B."/>
            <person name="Shatkay H."/>
            <person name="Dew I."/>
            <person name="Miller J.R."/>
            <person name="Flanigan M.J."/>
            <person name="Edwards N.J."/>
            <person name="Bolanos R."/>
            <person name="Fasulo D."/>
            <person name="Halldorsson B.V."/>
            <person name="Hannenhalli S."/>
            <person name="Turner R."/>
            <person name="Yooseph S."/>
            <person name="Lu F."/>
            <person name="Nusskern D.R."/>
            <person name="Shue B.C."/>
            <person name="Zheng X.H."/>
            <person name="Zhong F."/>
            <person name="Delcher A.L."/>
            <person name="Huson D.H."/>
            <person name="Kravitz S.A."/>
            <person name="Mouchard L."/>
            <person name="Reinert K."/>
            <person name="Remington K.A."/>
            <person name="Clark A.G."/>
            <person name="Waterman M.S."/>
            <person name="Eichler E.E."/>
            <person name="Adams M.D."/>
            <person name="Hunkapiller M.W."/>
            <person name="Myers E.W."/>
            <person name="Venter J.C."/>
        </authorList>
    </citation>
    <scope>NUCLEOTIDE SEQUENCE [LARGE SCALE GENOMIC DNA]</scope>
</reference>
<reference key="8">
    <citation type="journal article" date="2004" name="Genome Res.">
        <title>The status, quality, and expansion of the NIH full-length cDNA project: the Mammalian Gene Collection (MGC).</title>
        <authorList>
            <consortium name="The MGC Project Team"/>
        </authorList>
    </citation>
    <scope>NUCLEOTIDE SEQUENCE [LARGE SCALE MRNA] (ISOFORM 2)</scope>
    <source>
        <tissue>Colon</tissue>
    </source>
</reference>
<reference key="9">
    <citation type="journal article" date="1997" name="Blood">
        <title>AC133, a novel marker for human hematopoietic stem and progenitor cells.</title>
        <authorList>
            <person name="Yin A.H."/>
            <person name="Miraglia S."/>
            <person name="Zanjani E.D."/>
            <person name="Almeida-Porada G."/>
            <person name="Ogawa M."/>
            <person name="Leary A.G."/>
            <person name="Olweus J."/>
            <person name="Kearney J."/>
            <person name="Buck D.W."/>
        </authorList>
    </citation>
    <scope>CHARACTERIZATION</scope>
    <source>
        <tissue>Fetal liver</tissue>
    </source>
</reference>
<reference key="10">
    <citation type="journal article" date="2007" name="Histochem. Cell Biol.">
        <title>Differential expression of prominin-1 (CD133) and prominin-2 in major cephalic exocrine glands of adult mice.</title>
        <authorList>
            <person name="Jaszai J."/>
            <person name="Janich P."/>
            <person name="Farkas L.M."/>
            <person name="Fargeas C.A."/>
            <person name="Huttner W.B."/>
            <person name="Corbeil D."/>
        </authorList>
    </citation>
    <scope>TISSUE SPECIFICITY</scope>
</reference>
<reference key="11">
    <citation type="journal article" date="2007" name="Tissue Antigens">
        <title>Nomenclature of prominin-1 (CD133) splice variants - an update.</title>
        <authorList>
            <person name="Fargeas C.A."/>
            <person name="Huttner W.B."/>
            <person name="Corbeil D."/>
        </authorList>
    </citation>
    <scope>NOMENCLATURE OF ISOFORMS</scope>
</reference>
<reference key="12">
    <citation type="journal article" date="2008" name="Stem Cells">
        <title>The stem cell marker prominin-1/CD133 on membrane particles in human cerebrospinal fluid offers novel approaches for studying central nervous system disease.</title>
        <authorList>
            <person name="Huttner H.B."/>
            <person name="Janich P."/>
            <person name="Koehrmann M."/>
            <person name="Jaszai J."/>
            <person name="Siebzehnrubl F."/>
            <person name="Bluemcke I."/>
            <person name="Suttorp M."/>
            <person name="Gahr M."/>
            <person name="Kuhnt D."/>
            <person name="Nimsky C."/>
            <person name="Krex D."/>
            <person name="Schackert G."/>
            <person name="Loewenbrueck K."/>
            <person name="Reichmann H."/>
            <person name="Juettler E."/>
            <person name="Hacke W."/>
            <person name="Schellinger P.D."/>
            <person name="Schwab S."/>
            <person name="Wilsch-Braeuninger M."/>
            <person name="Marzesco A.M."/>
            <person name="Corbeil D."/>
        </authorList>
    </citation>
    <scope>SUBCELLULAR LOCATION</scope>
</reference>
<reference key="13">
    <citation type="journal article" date="2009" name="FEBS Lett.">
        <title>Release of extracellular membrane vesicles from microvilli of epithelial cells is enhanced by depleting membrane cholesterol.</title>
        <authorList>
            <person name="Marzesco A.M."/>
            <person name="Wilsch-Brauninger M."/>
            <person name="Dubreuil V."/>
            <person name="Janich P."/>
            <person name="Langenfeld K."/>
            <person name="Thiele C."/>
            <person name="Huttner W.B."/>
            <person name="Corbeil D."/>
        </authorList>
    </citation>
    <scope>SUBCELLULAR LOCATION</scope>
</reference>
<reference key="14">
    <citation type="journal article" date="2011" name="Oncogene">
        <title>CD133 suppresses neuroblastoma cell differentiation via signal pathway modification.</title>
        <authorList>
            <person name="Takenobu H."/>
            <person name="Shimozato O."/>
            <person name="Nakamura T."/>
            <person name="Ochiai H."/>
            <person name="Yamaguchi Y."/>
            <person name="Ohira M."/>
            <person name="Nakagawara A."/>
            <person name="Kamijo T."/>
        </authorList>
    </citation>
    <scope>FUNCTION</scope>
</reference>
<reference key="15">
    <citation type="journal article" date="2000" name="Hum. Mol. Genet.">
        <title>A frameshift mutation in prominin (mouse)-like 1 causes human retinal degeneration.</title>
        <authorList>
            <person name="Maw M.A."/>
            <person name="Corbeil D."/>
            <person name="Koch J."/>
            <person name="Hellwig A."/>
            <person name="Wilson-Wheeler J.C."/>
            <person name="Bridges R.J."/>
            <person name="Kumaramanickavel G."/>
            <person name="John S."/>
            <person name="Nancarrow D."/>
            <person name="Roeper K."/>
            <person name="Weigmann A."/>
            <person name="Huttner W.B."/>
            <person name="Denton M.J."/>
        </authorList>
    </citation>
    <scope>INVOLVEMENT IN RP41</scope>
</reference>
<reference key="16">
    <citation type="journal article" date="2007" name="Hum. Genet.">
        <title>Severe retinitis pigmentosa mapped to 4p15 and associated with a novel mutation in the PROM1 gene.</title>
        <authorList>
            <person name="Zhang Q."/>
            <person name="Zulfiqar F."/>
            <person name="Xiao X."/>
            <person name="Riazuddin S.A."/>
            <person name="Ahmad Z."/>
            <person name="Caruso R."/>
            <person name="MacDonald I."/>
            <person name="Sieving P."/>
            <person name="Riazuddin S."/>
            <person name="Hejtmancik J.F."/>
        </authorList>
    </citation>
    <scope>INVOLVEMENT IN RP41</scope>
</reference>
<reference key="17">
    <citation type="journal article" date="2011" name="Sci. Signal.">
        <title>System-wide temporal characterization of the proteome and phosphoproteome of human embryonic stem cell differentiation.</title>
        <authorList>
            <person name="Rigbolt K.T."/>
            <person name="Prokhorova T.A."/>
            <person name="Akimov V."/>
            <person name="Henningsen J."/>
            <person name="Johansen P.T."/>
            <person name="Kratchmarova I."/>
            <person name="Kassem M."/>
            <person name="Mann M."/>
            <person name="Olsen J.V."/>
            <person name="Blagoev B."/>
        </authorList>
    </citation>
    <scope>PHOSPHORYLATION [LARGE SCALE ANALYSIS] AT SER-863</scope>
    <scope>IDENTIFICATION BY MASS SPECTROMETRY [LARGE SCALE ANALYSIS]</scope>
</reference>
<reference key="18">
    <citation type="journal article" date="2014" name="J. Mol. Biol.">
        <title>Post-translational regulation of CD133 by ATase1/ATase2-mediated lysine acetylation.</title>
        <authorList>
            <person name="Mak A.B."/>
            <person name="Pehar M."/>
            <person name="Nixon A.M."/>
            <person name="Williams R.A."/>
            <person name="Uetrecht A.C."/>
            <person name="Puglielli L."/>
            <person name="Moffat J."/>
        </authorList>
    </citation>
    <scope>IDENTIFICATION BY MASS SPECTROMETRY</scope>
    <scope>FUNCTION</scope>
    <scope>SUBCELLULAR LOCATION</scope>
    <scope>ACETYLATION AT LYS-225; LYS-257 AND LYS-264 BY NAT8 AND NAT8B</scope>
    <scope>MUTAGENESIS OF LYS-225; LYS-257 AND LYS-264</scope>
    <scope>INTERACTION WITH NAT8 AND NAT8B</scope>
</reference>
<reference key="19">
    <citation type="journal article" date="2008" name="J. Clin. Invest.">
        <title>Mutant prominin 1 found in patients with macular degeneration disrupts photoreceptor disk morphogenesis in mice.</title>
        <authorList>
            <person name="Yang Z."/>
            <person name="Chen Y."/>
            <person name="Lillo C."/>
            <person name="Chien J."/>
            <person name="Yu Z."/>
            <person name="Michaelides M."/>
            <person name="Klein M."/>
            <person name="Howes K.A."/>
            <person name="Li Y."/>
            <person name="Kaminoh Y."/>
            <person name="Chen H."/>
            <person name="Zhao C."/>
            <person name="Chen Y."/>
            <person name="Al-Sheikh Y.T."/>
            <person name="Karan G."/>
            <person name="Corbeil D."/>
            <person name="Escher P."/>
            <person name="Kamaya S."/>
            <person name="Li C."/>
            <person name="Johnson S."/>
            <person name="Frederick J.M."/>
            <person name="Zhao Y."/>
            <person name="Wang C."/>
            <person name="Cameron D.J."/>
            <person name="Huttner W.B."/>
            <person name="Schorderet D.F."/>
            <person name="Munier F.L."/>
            <person name="Moore A.T."/>
            <person name="Birch D.G."/>
            <person name="Baehr W."/>
            <person name="Hunt D.M."/>
            <person name="Williams D.S."/>
            <person name="Zhang K."/>
        </authorList>
    </citation>
    <scope>INVOLVEMENT IN CORD12</scope>
    <scope>INVOLVEMENT IN STGD4</scope>
    <scope>INVOLVEMENT IN MCDR2</scope>
    <scope>VARIANT CORD12/STGD4/MCDR2 CYS-373</scope>
    <scope>INTERACTION WITH CDHR1 AND ACTIN</scope>
    <scope>CHARACTERIZATION OF VARIANT CORD12/STGD4/MCDR2 CYS-373</scope>
</reference>
<reference key="20">
    <citation type="journal article" date="2022" name="Invest. Ophthalmol. Vis. Sci.">
        <title>Dominant Cone Rod Dystrophy, Previously Assigned to a Missense Variant in RIMS1, Is Fully Explained by Co-Inheritance of a Dominant Allele of PROM1.</title>
        <authorList>
            <consortium name="Genomics England Research Consortium"/>
            <person name="Martin-Gutierrez M.P."/>
            <person name="Schiff E.R."/>
            <person name="Wright G."/>
            <person name="Waseem N."/>
            <person name="Mahroo O.A."/>
            <person name="Michaelides M."/>
            <person name="Moore A.T."/>
            <person name="Webster A.R."/>
            <person name="Arno G."/>
        </authorList>
    </citation>
    <scope>VARIANT CORD12 CYS-373</scope>
</reference>
<keyword id="KW-0007">Acetylation</keyword>
<keyword id="KW-0025">Alternative splicing</keyword>
<keyword id="KW-1003">Cell membrane</keyword>
<keyword id="KW-0966">Cell projection</keyword>
<keyword id="KW-0969">Cilium</keyword>
<keyword id="KW-0182">Cone-rod dystrophy</keyword>
<keyword id="KW-0903">Direct protein sequencing</keyword>
<keyword id="KW-0225">Disease variant</keyword>
<keyword id="KW-0256">Endoplasmic reticulum</keyword>
<keyword id="KW-0325">Glycoprotein</keyword>
<keyword id="KW-0472">Membrane</keyword>
<keyword id="KW-0597">Phosphoprotein</keyword>
<keyword id="KW-1267">Proteomics identification</keyword>
<keyword id="KW-1185">Reference proteome</keyword>
<keyword id="KW-0682">Retinitis pigmentosa</keyword>
<keyword id="KW-0732">Signal</keyword>
<keyword id="KW-0751">Stargardt disease</keyword>
<keyword id="KW-0812">Transmembrane</keyword>
<keyword id="KW-1133">Transmembrane helix</keyword>
<comment type="function">
    <text evidence="8 9">May play a role in cell differentiation, proliferation and apoptosis (PubMed:24556617). Binds cholesterol in cholesterol-containing plasma membrane microdomains and may play a role in the organization of the apical plasma membrane in epithelial cells. During early retinal development acts as a key regulator of disk morphogenesis. Involved in regulation of MAPK and Akt signaling pathways. In neuroblastoma cells suppresses cell differentiation such as neurite outgrowth in a RET-dependent manner (PubMed:20818439).</text>
</comment>
<comment type="subunit">
    <text evidence="7 9">Interacts with CDHR1 and with actin filaments. Interacts with NAT8 and NAT8B.</text>
</comment>
<comment type="interaction">
    <interactant intactId="EBI-3447549">
        <id>O43490</id>
    </interactant>
    <interactant intactId="EBI-301697">
        <id>Q9UBN7</id>
        <label>HDAC6</label>
    </interactant>
    <organismsDiffer>false</organismsDiffer>
    <experiments>4</experiments>
</comment>
<comment type="interaction">
    <interactant intactId="EBI-3447549">
        <id>O43490</id>
    </interactant>
    <interactant intactId="EBI-4395045">
        <id>Q8VHP6</id>
        <label>Cdhr1</label>
    </interactant>
    <organismsDiffer>true</organismsDiffer>
    <experiments>3</experiments>
</comment>
<comment type="interaction">
    <interactant intactId="EBI-21452032">
        <id>O43490-2</id>
    </interactant>
    <interactant intactId="EBI-301697">
        <id>Q9UBN7</id>
        <label>HDAC6</label>
    </interactant>
    <organismsDiffer>false</organismsDiffer>
    <experiments>2</experiments>
</comment>
<comment type="subcellular location">
    <subcellularLocation>
        <location evidence="1">Apical cell membrane</location>
        <topology evidence="1">Multi-pass membrane protein</topology>
    </subcellularLocation>
    <subcellularLocation>
        <location evidence="1">Cell projection</location>
        <location evidence="1">Microvillus membrane</location>
        <topology evidence="1">Multi-pass membrane protein</topology>
    </subcellularLocation>
    <subcellularLocation>
        <location evidence="1">Cell projection</location>
        <location evidence="1">Cilium</location>
        <location evidence="1">Photoreceptor outer segment</location>
    </subcellularLocation>
    <subcellularLocation>
        <location>Endoplasmic reticulum</location>
    </subcellularLocation>
    <subcellularLocation>
        <location>Endoplasmic reticulum-Golgi intermediate compartment</location>
    </subcellularLocation>
    <text>Found in extracellular membrane particles in various body fluids such as cerebrospinal fluid, saliva, seminal fluid and urine.</text>
</comment>
<comment type="alternative products">
    <event type="alternative splicing"/>
    <isoform>
        <id>O43490-1</id>
        <name>1</name>
        <name>AC133-1</name>
        <name>S2</name>
        <sequence type="displayed"/>
    </isoform>
    <isoform>
        <id>O43490-2</id>
        <name>2</name>
        <name>AC133-2</name>
        <name>S1</name>
        <sequence type="described" ref="VSP_039069"/>
    </isoform>
    <isoform>
        <id>O43490-3</id>
        <name>3</name>
        <name>S3</name>
        <sequence type="described" ref="VSP_040000 VSP_040002 VSP_040004"/>
    </isoform>
    <isoform>
        <id>O43490-4</id>
        <name>4</name>
        <name>S10</name>
        <sequence type="described" ref="VSP_040000 VSP_040003"/>
    </isoform>
    <isoform>
        <id>O43490-5</id>
        <name>5</name>
        <name>S7</name>
        <sequence type="described" ref="VSP_040000 VSP_040001"/>
    </isoform>
    <isoform>
        <id>O43490-6</id>
        <name>6</name>
        <name>S11</name>
        <sequence type="described" ref="VSP_040001"/>
    </isoform>
    <isoform>
        <id>O43490-7</id>
        <name>7</name>
        <name>S12</name>
        <sequence type="described" ref="VSP_040003"/>
    </isoform>
</comment>
<comment type="tissue specificity">
    <text evidence="4 6">Isoform 1 is selectively expressed on CD34 hematopoietic stem and progenitor cells in adult and fetal bone marrow, fetal liver, cord blood and adult peripheral blood. Isoform 1 is not detected on other blood cells. Isoform 1 is also expressed in a number of non-lymphoid tissues including retina, pancreas, placenta, kidney, liver, lung, brain and heart. Found in saliva within small membrane particles. Isoform 2 is predominantly expressed in fetal liver, skeletal muscle, kidney, and heart as well as adult pancreas, kidney, liver, lung, and placenta. Isoform 2 is highly expressed in fetal liver, low in bone marrow, and barely detectable in peripheral blood. Isoform 2 is expressed on hematopoietic stem cells and in epidermal basal cells (at protein level). Expressed in adult retina by rod and cone photoreceptor cells (at protein level).</text>
</comment>
<comment type="PTM">
    <text evidence="4">Isoform 1 and isoform 2 are glycosylated.</text>
</comment>
<comment type="PTM">
    <text evidence="9">Acetylation at Lys-225, Lys-257 and Lys-264 by NAT8 and NAT8B may control PROM1 protein expression and its function in cell apoptosis.</text>
</comment>
<comment type="disease" evidence="3 5">
    <disease id="DI-00995">
        <name>Retinitis pigmentosa 41</name>
        <acronym>RP41</acronym>
        <description>A retinal dystrophy belonging to the group of pigmentary retinopathies. Retinitis pigmentosa is characterized by retinal pigment deposits visible on fundus examination and primary loss of rod photoreceptor cells followed by secondary loss of cone photoreceptors. Patients typically have night vision blindness and loss of midperipheral visual field. As their condition progresses, they lose their far peripheral visual field and eventually central vision as well.</description>
        <dbReference type="MIM" id="612095"/>
    </disease>
    <text>The disease is caused by variants affecting the gene represented in this entry.</text>
</comment>
<comment type="disease" evidence="7 10">
    <disease id="DI-00326">
        <name>Cone-rod dystrophy 12</name>
        <acronym>CORD12</acronym>
        <description>An inherited retinal dystrophy characterized by retinal pigment deposits visible on fundus examination, predominantly in the macular region, and initial loss of cone photoreceptors followed by rod degeneration. This leads to decreased visual acuity and sensitivity in the central visual field, followed by loss of peripheral vision. Severe loss of vision occurs earlier than in retinitis pigmentosa, due to cone photoreceptors degenerating at a higher rate than rod photoreceptors.</description>
        <dbReference type="MIM" id="612657"/>
    </disease>
    <text>The disease is caused by variants affecting the gene represented in this entry.</text>
</comment>
<comment type="disease" evidence="7">
    <disease id="DI-01086">
        <name>Stargardt disease 4</name>
        <acronym>STGD4</acronym>
        <description>A common hereditary macular degeneration. It is characterized by decreased central vision, atrophy of the macula and underlying retinal pigment epithelium, and frequent presence of prominent flecks in the posterior pole of the retina.</description>
        <dbReference type="MIM" id="603786"/>
    </disease>
    <text>The disease is caused by variants affecting the gene represented in this entry.</text>
</comment>
<comment type="disease" evidence="7">
    <disease id="DI-00968">
        <name>Macular dystrophy, retinal, 2</name>
        <acronym>MCDR2</acronym>
        <description>An autosomal dominant retinal disease characterized by dyschromatopsia, gradual progressive loss of central visual acuity, and bilateral annular atrophy of retinal pigment epithelium at the macula.</description>
        <dbReference type="MIM" id="608051"/>
    </disease>
    <text>The disease is caused by variants affecting the gene represented in this entry.</text>
</comment>
<comment type="miscellaneous">
    <text>Is used as marker for hematopoietic stem and progenitor cells (HSPC) for somatic stem cell isolation.</text>
</comment>
<comment type="similarity">
    <text evidence="16">Belongs to the prominin family.</text>
</comment>
<name>PROM1_HUMAN</name>